<proteinExistence type="inferred from homology"/>
<comment type="function">
    <text evidence="1">One of at least two accessory proteins for anaerobic nitric oxide (NO) reductase. Reduces the rubredoxin moiety of NO reductase.</text>
</comment>
<comment type="catalytic activity">
    <reaction evidence="1">
        <text>2 reduced [nitric oxide reductase rubredoxin domain] + NAD(+) + H(+) = 2 oxidized [nitric oxide reductase rubredoxin domain] + NADH</text>
        <dbReference type="Rhea" id="RHEA:42960"/>
        <dbReference type="Rhea" id="RHEA-COMP:10304"/>
        <dbReference type="Rhea" id="RHEA-COMP:10305"/>
        <dbReference type="ChEBI" id="CHEBI:15378"/>
        <dbReference type="ChEBI" id="CHEBI:29033"/>
        <dbReference type="ChEBI" id="CHEBI:29034"/>
        <dbReference type="ChEBI" id="CHEBI:57540"/>
        <dbReference type="ChEBI" id="CHEBI:57945"/>
    </reaction>
</comment>
<comment type="cofactor">
    <cofactor evidence="1">
        <name>FAD</name>
        <dbReference type="ChEBI" id="CHEBI:57692"/>
    </cofactor>
</comment>
<comment type="pathway">
    <text evidence="1">Nitrogen metabolism; nitric oxide reduction.</text>
</comment>
<comment type="subcellular location">
    <subcellularLocation>
        <location evidence="1">Cytoplasm</location>
    </subcellularLocation>
</comment>
<comment type="similarity">
    <text evidence="1">Belongs to the FAD-dependent oxidoreductase family.</text>
</comment>
<evidence type="ECO:0000255" key="1">
    <source>
        <dbReference type="HAMAP-Rule" id="MF_01313"/>
    </source>
</evidence>
<keyword id="KW-0963">Cytoplasm</keyword>
<keyword id="KW-0274">FAD</keyword>
<keyword id="KW-0285">Flavoprotein</keyword>
<keyword id="KW-0520">NAD</keyword>
<keyword id="KW-0560">Oxidoreductase</keyword>
<protein>
    <recommendedName>
        <fullName evidence="1">Nitric oxide reductase FlRd-NAD(+) reductase</fullName>
        <ecNumber evidence="1">1.18.1.-</ecNumber>
    </recommendedName>
    <alternativeName>
        <fullName evidence="1">Flavorubredoxin reductase</fullName>
        <shortName evidence="1">FlRd-reductase</shortName>
        <shortName evidence="1">FlavoRb reductase</shortName>
    </alternativeName>
</protein>
<feature type="chain" id="PRO_1000141175" description="Nitric oxide reductase FlRd-NAD(+) reductase">
    <location>
        <begin position="1"/>
        <end position="377"/>
    </location>
</feature>
<gene>
    <name evidence="1" type="primary">norW</name>
    <name evidence="1" type="synonym">flrR</name>
    <name type="ordered locus">KPK_1080</name>
</gene>
<name>NORW_KLEP3</name>
<organism>
    <name type="scientific">Klebsiella pneumoniae (strain 342)</name>
    <dbReference type="NCBI Taxonomy" id="507522"/>
    <lineage>
        <taxon>Bacteria</taxon>
        <taxon>Pseudomonadati</taxon>
        <taxon>Pseudomonadota</taxon>
        <taxon>Gammaproteobacteria</taxon>
        <taxon>Enterobacterales</taxon>
        <taxon>Enterobacteriaceae</taxon>
        <taxon>Klebsiella/Raoultella group</taxon>
        <taxon>Klebsiella</taxon>
        <taxon>Klebsiella pneumoniae complex</taxon>
    </lineage>
</organism>
<dbReference type="EC" id="1.18.1.-" evidence="1"/>
<dbReference type="EMBL" id="CP000964">
    <property type="protein sequence ID" value="ACI06603.1"/>
    <property type="molecule type" value="Genomic_DNA"/>
</dbReference>
<dbReference type="SMR" id="B5XVA0"/>
<dbReference type="KEGG" id="kpe:KPK_1080"/>
<dbReference type="HOGENOM" id="CLU_003291_4_4_6"/>
<dbReference type="UniPathway" id="UPA00638"/>
<dbReference type="Proteomes" id="UP000001734">
    <property type="component" value="Chromosome"/>
</dbReference>
<dbReference type="GO" id="GO:0005737">
    <property type="term" value="C:cytoplasm"/>
    <property type="evidence" value="ECO:0007669"/>
    <property type="project" value="UniProtKB-SubCell"/>
</dbReference>
<dbReference type="GO" id="GO:0016731">
    <property type="term" value="F:oxidoreductase activity, acting on iron-sulfur proteins as donors, NAD or NADP as acceptor"/>
    <property type="evidence" value="ECO:0007669"/>
    <property type="project" value="UniProtKB-UniRule"/>
</dbReference>
<dbReference type="Gene3D" id="3.30.390.120">
    <property type="match status" value="1"/>
</dbReference>
<dbReference type="Gene3D" id="3.50.50.60">
    <property type="entry name" value="FAD/NAD(P)-binding domain"/>
    <property type="match status" value="2"/>
</dbReference>
<dbReference type="HAMAP" id="MF_01313">
    <property type="entry name" value="NorW"/>
    <property type="match status" value="1"/>
</dbReference>
<dbReference type="InterPro" id="IPR050260">
    <property type="entry name" value="FAD-bd_OxRdtase"/>
</dbReference>
<dbReference type="InterPro" id="IPR036188">
    <property type="entry name" value="FAD/NAD-bd_sf"/>
</dbReference>
<dbReference type="InterPro" id="IPR023753">
    <property type="entry name" value="FAD/NAD-binding_dom"/>
</dbReference>
<dbReference type="InterPro" id="IPR023961">
    <property type="entry name" value="NO_rdtase_NorW"/>
</dbReference>
<dbReference type="InterPro" id="IPR041364">
    <property type="entry name" value="Rbx-bd"/>
</dbReference>
<dbReference type="NCBIfam" id="NF003437">
    <property type="entry name" value="PRK04965.1"/>
    <property type="match status" value="1"/>
</dbReference>
<dbReference type="PANTHER" id="PTHR43429:SF3">
    <property type="entry name" value="NITRITE REDUCTASE [NAD(P)H]"/>
    <property type="match status" value="1"/>
</dbReference>
<dbReference type="PANTHER" id="PTHR43429">
    <property type="entry name" value="PYRIDINE NUCLEOTIDE-DISULFIDE OXIDOREDUCTASE DOMAIN-CONTAINING"/>
    <property type="match status" value="1"/>
</dbReference>
<dbReference type="Pfam" id="PF07992">
    <property type="entry name" value="Pyr_redox_2"/>
    <property type="match status" value="1"/>
</dbReference>
<dbReference type="Pfam" id="PF18113">
    <property type="entry name" value="Rbx_binding"/>
    <property type="match status" value="1"/>
</dbReference>
<dbReference type="PRINTS" id="PR00368">
    <property type="entry name" value="FADPNR"/>
</dbReference>
<dbReference type="PRINTS" id="PR00411">
    <property type="entry name" value="PNDRDTASEI"/>
</dbReference>
<dbReference type="SUPFAM" id="SSF51905">
    <property type="entry name" value="FAD/NAD(P)-binding domain"/>
    <property type="match status" value="1"/>
</dbReference>
<accession>B5XVA0</accession>
<reference key="1">
    <citation type="journal article" date="2008" name="PLoS Genet.">
        <title>Complete genome sequence of the N2-fixing broad host range endophyte Klebsiella pneumoniae 342 and virulence predictions verified in mice.</title>
        <authorList>
            <person name="Fouts D.E."/>
            <person name="Tyler H.L."/>
            <person name="DeBoy R.T."/>
            <person name="Daugherty S."/>
            <person name="Ren Q."/>
            <person name="Badger J.H."/>
            <person name="Durkin A.S."/>
            <person name="Huot H."/>
            <person name="Shrivastava S."/>
            <person name="Kothari S."/>
            <person name="Dodson R.J."/>
            <person name="Mohamoud Y."/>
            <person name="Khouri H."/>
            <person name="Roesch L.F.W."/>
            <person name="Krogfelt K.A."/>
            <person name="Struve C."/>
            <person name="Triplett E.W."/>
            <person name="Methe B.A."/>
        </authorList>
    </citation>
    <scope>NUCLEOTIDE SEQUENCE [LARGE SCALE GENOMIC DNA]</scope>
    <source>
        <strain>342</strain>
    </source>
</reference>
<sequence>MSDGIVIIGSGFAARQLVKNIRKQDTQIPLTLIAADSMDEYNKPDLSHVISRGQKADDLTLQSAGEFAEQYNLRLFPHTWVSDIDAENRLVKSQDNQWRYDKLVLATGATPFIPPVPGRELMLTLNSQREYGAAQSQLHDAKRVLIVGGGLIGCELAMDFCRAGKAVTVVDNSASVLAALMPPEASSRLQHRLTEMGVHLMLKAQLEGLEQTADGIRVSLDRQRAITVDAVVAAAGLRPETSLARHAGLQINRGVVVNNQLQTSDPAIYALGDCAEINGTVLPFLQPILLSAMCLSKNLLAQAGELKLPPMLVKVKTPDLPLHLAGDTRRDDLTWNIVAAKEGLVAKGVDGENQLRAFVVSEDKMKEAFALLKQLVS</sequence>